<organism>
    <name type="scientific">Pongo abelii</name>
    <name type="common">Sumatran orangutan</name>
    <name type="synonym">Pongo pygmaeus abelii</name>
    <dbReference type="NCBI Taxonomy" id="9601"/>
    <lineage>
        <taxon>Eukaryota</taxon>
        <taxon>Metazoa</taxon>
        <taxon>Chordata</taxon>
        <taxon>Craniata</taxon>
        <taxon>Vertebrata</taxon>
        <taxon>Euteleostomi</taxon>
        <taxon>Mammalia</taxon>
        <taxon>Eutheria</taxon>
        <taxon>Euarchontoglires</taxon>
        <taxon>Primates</taxon>
        <taxon>Haplorrhini</taxon>
        <taxon>Catarrhini</taxon>
        <taxon>Hominidae</taxon>
        <taxon>Pongo</taxon>
    </lineage>
</organism>
<reference key="1">
    <citation type="submission" date="2004-11" db="EMBL/GenBank/DDBJ databases">
        <authorList>
            <consortium name="The German cDNA consortium"/>
        </authorList>
    </citation>
    <scope>NUCLEOTIDE SEQUENCE [LARGE SCALE MRNA]</scope>
    <source>
        <tissue>Kidney</tissue>
    </source>
</reference>
<sequence>MGNIFGNLLKSLIGKKEMRILMVGLDAAGKTTILYKLKLGEIVTTIPTIGFNVETVEYKNISFTVWDVGGQDKIRPLWRHYFQNTQGLIFVVDSNDRERVNEAREELMRMLAEDELRDAVLLVFANKQDLPNAMNAAEITDKLGLHSLRHRNWYIQATCATSGDGLYEGLDWLANQLKNKK</sequence>
<feature type="initiator methionine" description="Removed" evidence="2">
    <location>
        <position position="1"/>
    </location>
</feature>
<feature type="chain" id="PRO_0000207388" description="ADP-ribosylation factor 3">
    <location>
        <begin position="2"/>
        <end position="181"/>
    </location>
</feature>
<feature type="binding site" evidence="1">
    <location>
        <begin position="24"/>
        <end position="31"/>
    </location>
    <ligand>
        <name>GTP</name>
        <dbReference type="ChEBI" id="CHEBI:37565"/>
    </ligand>
</feature>
<feature type="binding site" evidence="1">
    <location>
        <begin position="67"/>
        <end position="71"/>
    </location>
    <ligand>
        <name>GTP</name>
        <dbReference type="ChEBI" id="CHEBI:37565"/>
    </ligand>
</feature>
<feature type="binding site" evidence="1">
    <location>
        <begin position="126"/>
        <end position="129"/>
    </location>
    <ligand>
        <name>GTP</name>
        <dbReference type="ChEBI" id="CHEBI:37565"/>
    </ligand>
</feature>
<feature type="lipid moiety-binding region" description="N-myristoyl glycine" evidence="2">
    <location>
        <position position="2"/>
    </location>
</feature>
<gene>
    <name type="primary">ARF3</name>
</gene>
<protein>
    <recommendedName>
        <fullName>ADP-ribosylation factor 3</fullName>
    </recommendedName>
</protein>
<evidence type="ECO:0000250" key="1"/>
<evidence type="ECO:0000255" key="2"/>
<evidence type="ECO:0000305" key="3"/>
<proteinExistence type="evidence at transcript level"/>
<name>ARF3_PONAB</name>
<keyword id="KW-0963">Cytoplasm</keyword>
<keyword id="KW-0931">ER-Golgi transport</keyword>
<keyword id="KW-0333">Golgi apparatus</keyword>
<keyword id="KW-0342">GTP-binding</keyword>
<keyword id="KW-0449">Lipoprotein</keyword>
<keyword id="KW-0519">Myristate</keyword>
<keyword id="KW-0547">Nucleotide-binding</keyword>
<keyword id="KW-0653">Protein transport</keyword>
<keyword id="KW-1185">Reference proteome</keyword>
<keyword id="KW-0813">Transport</keyword>
<accession>Q5R5P7</accession>
<dbReference type="EMBL" id="CR860810">
    <property type="protein sequence ID" value="CAH92919.1"/>
    <property type="molecule type" value="mRNA"/>
</dbReference>
<dbReference type="RefSeq" id="NP_001126717.1">
    <property type="nucleotide sequence ID" value="NM_001133245.1"/>
</dbReference>
<dbReference type="SMR" id="Q5R5P7"/>
<dbReference type="FunCoup" id="Q5R5P7">
    <property type="interactions" value="2543"/>
</dbReference>
<dbReference type="STRING" id="9601.ENSPPYP00000005106"/>
<dbReference type="Ensembl" id="ENSPPYT00000005307.2">
    <property type="protein sequence ID" value="ENSPPYP00000005106.1"/>
    <property type="gene ID" value="ENSPPYG00000004473.2"/>
</dbReference>
<dbReference type="GeneID" id="100173718"/>
<dbReference type="KEGG" id="pon:100173718"/>
<dbReference type="CTD" id="377"/>
<dbReference type="eggNOG" id="KOG0070">
    <property type="taxonomic scope" value="Eukaryota"/>
</dbReference>
<dbReference type="GeneTree" id="ENSGT00950000183080"/>
<dbReference type="HOGENOM" id="CLU_040729_9_3_1"/>
<dbReference type="InParanoid" id="Q5R5P7"/>
<dbReference type="OrthoDB" id="2011769at2759"/>
<dbReference type="TreeFam" id="TF300808"/>
<dbReference type="Proteomes" id="UP000001595">
    <property type="component" value="Chromosome 12"/>
</dbReference>
<dbReference type="GO" id="GO:0005794">
    <property type="term" value="C:Golgi apparatus"/>
    <property type="evidence" value="ECO:0007669"/>
    <property type="project" value="UniProtKB-SubCell"/>
</dbReference>
<dbReference type="GO" id="GO:0048471">
    <property type="term" value="C:perinuclear region of cytoplasm"/>
    <property type="evidence" value="ECO:0007669"/>
    <property type="project" value="UniProtKB-SubCell"/>
</dbReference>
<dbReference type="GO" id="GO:0005525">
    <property type="term" value="F:GTP binding"/>
    <property type="evidence" value="ECO:0007669"/>
    <property type="project" value="UniProtKB-KW"/>
</dbReference>
<dbReference type="GO" id="GO:0003924">
    <property type="term" value="F:GTPase activity"/>
    <property type="evidence" value="ECO:0007669"/>
    <property type="project" value="InterPro"/>
</dbReference>
<dbReference type="GO" id="GO:0015031">
    <property type="term" value="P:protein transport"/>
    <property type="evidence" value="ECO:0007669"/>
    <property type="project" value="UniProtKB-KW"/>
</dbReference>
<dbReference type="GO" id="GO:0016192">
    <property type="term" value="P:vesicle-mediated transport"/>
    <property type="evidence" value="ECO:0007669"/>
    <property type="project" value="UniProtKB-KW"/>
</dbReference>
<dbReference type="CDD" id="cd04150">
    <property type="entry name" value="Arf1_5_like"/>
    <property type="match status" value="1"/>
</dbReference>
<dbReference type="FunFam" id="3.40.50.300:FF:003500">
    <property type="entry name" value="ADP-ribosylation factor 1"/>
    <property type="match status" value="1"/>
</dbReference>
<dbReference type="Gene3D" id="3.40.50.300">
    <property type="entry name" value="P-loop containing nucleotide triphosphate hydrolases"/>
    <property type="match status" value="1"/>
</dbReference>
<dbReference type="InterPro" id="IPR045872">
    <property type="entry name" value="Arf1-5-like"/>
</dbReference>
<dbReference type="InterPro" id="IPR027417">
    <property type="entry name" value="P-loop_NTPase"/>
</dbReference>
<dbReference type="InterPro" id="IPR005225">
    <property type="entry name" value="Small_GTP-bd"/>
</dbReference>
<dbReference type="InterPro" id="IPR024156">
    <property type="entry name" value="Small_GTPase_ARF"/>
</dbReference>
<dbReference type="InterPro" id="IPR006689">
    <property type="entry name" value="Small_GTPase_ARF/SAR"/>
</dbReference>
<dbReference type="NCBIfam" id="TIGR00231">
    <property type="entry name" value="small_GTP"/>
    <property type="match status" value="1"/>
</dbReference>
<dbReference type="PANTHER" id="PTHR11711">
    <property type="entry name" value="ADP RIBOSYLATION FACTOR-RELATED"/>
    <property type="match status" value="1"/>
</dbReference>
<dbReference type="Pfam" id="PF00025">
    <property type="entry name" value="Arf"/>
    <property type="match status" value="1"/>
</dbReference>
<dbReference type="PRINTS" id="PR00328">
    <property type="entry name" value="SAR1GTPBP"/>
</dbReference>
<dbReference type="SMART" id="SM00177">
    <property type="entry name" value="ARF"/>
    <property type="match status" value="1"/>
</dbReference>
<dbReference type="SMART" id="SM00175">
    <property type="entry name" value="RAB"/>
    <property type="match status" value="1"/>
</dbReference>
<dbReference type="SMART" id="SM00178">
    <property type="entry name" value="SAR"/>
    <property type="match status" value="1"/>
</dbReference>
<dbReference type="SUPFAM" id="SSF52540">
    <property type="entry name" value="P-loop containing nucleoside triphosphate hydrolases"/>
    <property type="match status" value="1"/>
</dbReference>
<dbReference type="PROSITE" id="PS51417">
    <property type="entry name" value="ARF"/>
    <property type="match status" value="1"/>
</dbReference>
<comment type="function">
    <text evidence="1">GTP-binding protein that functions as an allosteric activator of the cholera toxin catalytic subunit, an ADP-ribosyltransferase. Involved in protein trafficking; may modulate vesicle budding and uncoating within the Golgi apparatus (By similarity).</text>
</comment>
<comment type="subunit">
    <text evidence="1">Interacts with PRKCABP. Interacts with PI4KB and NCS1/FREQ at the Golgi complex.</text>
</comment>
<comment type="subcellular location">
    <subcellularLocation>
        <location evidence="1">Golgi apparatus</location>
    </subcellularLocation>
    <subcellularLocation>
        <location evidence="1">Cytoplasm</location>
        <location evidence="1">Perinuclear region</location>
    </subcellularLocation>
</comment>
<comment type="similarity">
    <text evidence="3">Belongs to the small GTPase superfamily. Arf family.</text>
</comment>